<proteinExistence type="inferred from homology"/>
<evidence type="ECO:0000255" key="1">
    <source>
        <dbReference type="HAMAP-Rule" id="MF_00539"/>
    </source>
</evidence>
<evidence type="ECO:0000256" key="2">
    <source>
        <dbReference type="SAM" id="MobiDB-lite"/>
    </source>
</evidence>
<evidence type="ECO:0000305" key="3"/>
<feature type="chain" id="PRO_1000128780" description="Large ribosomal subunit protein bL27">
    <location>
        <begin position="1"/>
        <end position="98"/>
    </location>
</feature>
<feature type="region of interest" description="Disordered" evidence="2">
    <location>
        <begin position="1"/>
        <end position="22"/>
    </location>
</feature>
<feature type="compositionally biased region" description="Polar residues" evidence="2">
    <location>
        <begin position="7"/>
        <end position="19"/>
    </location>
</feature>
<reference key="1">
    <citation type="journal article" date="2013" name="Plant Physiol.">
        <title>A Nostoc punctiforme Sugar Transporter Necessary to Establish a Cyanobacterium-Plant Symbiosis.</title>
        <authorList>
            <person name="Ekman M."/>
            <person name="Picossi S."/>
            <person name="Campbell E.L."/>
            <person name="Meeks J.C."/>
            <person name="Flores E."/>
        </authorList>
    </citation>
    <scope>NUCLEOTIDE SEQUENCE [LARGE SCALE GENOMIC DNA]</scope>
    <source>
        <strain>ATCC 29133 / PCC 73102</strain>
    </source>
</reference>
<organism>
    <name type="scientific">Nostoc punctiforme (strain ATCC 29133 / PCC 73102)</name>
    <dbReference type="NCBI Taxonomy" id="63737"/>
    <lineage>
        <taxon>Bacteria</taxon>
        <taxon>Bacillati</taxon>
        <taxon>Cyanobacteriota</taxon>
        <taxon>Cyanophyceae</taxon>
        <taxon>Nostocales</taxon>
        <taxon>Nostocaceae</taxon>
        <taxon>Nostoc</taxon>
    </lineage>
</organism>
<comment type="similarity">
    <text evidence="1">Belongs to the bacterial ribosomal protein bL27 family.</text>
</comment>
<sequence length="98" mass="10481">MAHKKGTGSTRNGRDSNAQRLGVKRYGGQVVRAGNILVRQRGTKFHPGNNVGIGSDDTLFALIDGVVMFERKGKTRKKVSVYLPLTAVETAPAEAVAS</sequence>
<protein>
    <recommendedName>
        <fullName evidence="1">Large ribosomal subunit protein bL27</fullName>
    </recommendedName>
    <alternativeName>
        <fullName evidence="3">50S ribosomal protein L27</fullName>
    </alternativeName>
</protein>
<dbReference type="EMBL" id="CP001037">
    <property type="protein sequence ID" value="ACC84402.1"/>
    <property type="molecule type" value="Genomic_DNA"/>
</dbReference>
<dbReference type="RefSeq" id="WP_012412343.1">
    <property type="nucleotide sequence ID" value="NC_010628.1"/>
</dbReference>
<dbReference type="SMR" id="B2IV09"/>
<dbReference type="STRING" id="63737.Npun_R6113"/>
<dbReference type="EnsemblBacteria" id="ACC84402">
    <property type="protein sequence ID" value="ACC84402"/>
    <property type="gene ID" value="Npun_R6113"/>
</dbReference>
<dbReference type="KEGG" id="npu:Npun_R6113"/>
<dbReference type="eggNOG" id="COG0211">
    <property type="taxonomic scope" value="Bacteria"/>
</dbReference>
<dbReference type="HOGENOM" id="CLU_095424_4_0_3"/>
<dbReference type="OrthoDB" id="9803474at2"/>
<dbReference type="PhylomeDB" id="B2IV09"/>
<dbReference type="Proteomes" id="UP000001191">
    <property type="component" value="Chromosome"/>
</dbReference>
<dbReference type="GO" id="GO:0022625">
    <property type="term" value="C:cytosolic large ribosomal subunit"/>
    <property type="evidence" value="ECO:0007669"/>
    <property type="project" value="TreeGrafter"/>
</dbReference>
<dbReference type="GO" id="GO:0003735">
    <property type="term" value="F:structural constituent of ribosome"/>
    <property type="evidence" value="ECO:0007669"/>
    <property type="project" value="InterPro"/>
</dbReference>
<dbReference type="GO" id="GO:0006412">
    <property type="term" value="P:translation"/>
    <property type="evidence" value="ECO:0007669"/>
    <property type="project" value="UniProtKB-UniRule"/>
</dbReference>
<dbReference type="FunFam" id="2.40.50.100:FF:000004">
    <property type="entry name" value="50S ribosomal protein L27"/>
    <property type="match status" value="1"/>
</dbReference>
<dbReference type="Gene3D" id="2.40.50.100">
    <property type="match status" value="1"/>
</dbReference>
<dbReference type="HAMAP" id="MF_00539">
    <property type="entry name" value="Ribosomal_bL27"/>
    <property type="match status" value="1"/>
</dbReference>
<dbReference type="InterPro" id="IPR001684">
    <property type="entry name" value="Ribosomal_bL27"/>
</dbReference>
<dbReference type="InterPro" id="IPR018261">
    <property type="entry name" value="Ribosomal_bL27_CS"/>
</dbReference>
<dbReference type="NCBIfam" id="TIGR00062">
    <property type="entry name" value="L27"/>
    <property type="match status" value="1"/>
</dbReference>
<dbReference type="PANTHER" id="PTHR15893:SF0">
    <property type="entry name" value="LARGE RIBOSOMAL SUBUNIT PROTEIN BL27M"/>
    <property type="match status" value="1"/>
</dbReference>
<dbReference type="PANTHER" id="PTHR15893">
    <property type="entry name" value="RIBOSOMAL PROTEIN L27"/>
    <property type="match status" value="1"/>
</dbReference>
<dbReference type="Pfam" id="PF01016">
    <property type="entry name" value="Ribosomal_L27"/>
    <property type="match status" value="1"/>
</dbReference>
<dbReference type="PRINTS" id="PR00063">
    <property type="entry name" value="RIBOSOMALL27"/>
</dbReference>
<dbReference type="SUPFAM" id="SSF110324">
    <property type="entry name" value="Ribosomal L27 protein-like"/>
    <property type="match status" value="1"/>
</dbReference>
<dbReference type="PROSITE" id="PS00831">
    <property type="entry name" value="RIBOSOMAL_L27"/>
    <property type="match status" value="1"/>
</dbReference>
<accession>B2IV09</accession>
<keyword id="KW-1185">Reference proteome</keyword>
<keyword id="KW-0687">Ribonucleoprotein</keyword>
<keyword id="KW-0689">Ribosomal protein</keyword>
<gene>
    <name evidence="1" type="primary">rpmA</name>
    <name evidence="1" type="synonym">rpl27</name>
    <name type="ordered locus">Npun_R6113</name>
</gene>
<name>RL27_NOSP7</name>